<sequence>MDTQAFRRSLHHSDRYNRRGFDSPTKRAQALEEAYQSDLISSIRDNGFTYTKGRLNIKLAQAFGFCWGVERAVAMAYETRRHYPNENIWITNEIIHNPSVNDHLRKMNVKFISAKNGIKDFSLVSNGDVVILPAFGATVQEMKLLHEKGCHIIDTTCPWVSKVWHTVEKHKKHVFTSIIHGKFKHEETLATSSFAGKYLVVLDLEEANYVSEYILGRGNRNEFMNKFAKACSNGFDPDKDLERVGVANQTTMLKSETEEIGKVFERTMLKKFGPENLNSHFLAFNTICDATEERQDAMFSLVDEDLDILVVIGGFNSSNTTHLQEIAITKNISSFHIDTPERISVKENSIFHKPLGSELELKNNFLPSGKINVGITSGASTPDKVVADVIEKLIDIAS</sequence>
<keyword id="KW-0004">4Fe-4S</keyword>
<keyword id="KW-0408">Iron</keyword>
<keyword id="KW-0411">Iron-sulfur</keyword>
<keyword id="KW-0414">Isoprene biosynthesis</keyword>
<keyword id="KW-0479">Metal-binding</keyword>
<keyword id="KW-0560">Oxidoreductase</keyword>
<keyword id="KW-1185">Reference proteome</keyword>
<dbReference type="EC" id="1.17.7.4" evidence="1"/>
<dbReference type="EMBL" id="CP000576">
    <property type="protein sequence ID" value="ABO16910.1"/>
    <property type="molecule type" value="Genomic_DNA"/>
</dbReference>
<dbReference type="RefSeq" id="WP_011862305.1">
    <property type="nucleotide sequence ID" value="NC_009091.1"/>
</dbReference>
<dbReference type="SMR" id="A3PAY5"/>
<dbReference type="STRING" id="167546.P9301_02871"/>
<dbReference type="KEGG" id="pmg:P9301_02871"/>
<dbReference type="eggNOG" id="COG0761">
    <property type="taxonomic scope" value="Bacteria"/>
</dbReference>
<dbReference type="HOGENOM" id="CLU_027486_4_0_3"/>
<dbReference type="OrthoDB" id="9804077at2"/>
<dbReference type="UniPathway" id="UPA00056">
    <property type="reaction ID" value="UER00097"/>
</dbReference>
<dbReference type="UniPathway" id="UPA00059">
    <property type="reaction ID" value="UER00105"/>
</dbReference>
<dbReference type="Proteomes" id="UP000001430">
    <property type="component" value="Chromosome"/>
</dbReference>
<dbReference type="GO" id="GO:0051539">
    <property type="term" value="F:4 iron, 4 sulfur cluster binding"/>
    <property type="evidence" value="ECO:0007669"/>
    <property type="project" value="UniProtKB-UniRule"/>
</dbReference>
<dbReference type="GO" id="GO:0051745">
    <property type="term" value="F:4-hydroxy-3-methylbut-2-enyl diphosphate reductase activity"/>
    <property type="evidence" value="ECO:0007669"/>
    <property type="project" value="UniProtKB-UniRule"/>
</dbReference>
<dbReference type="GO" id="GO:0046872">
    <property type="term" value="F:metal ion binding"/>
    <property type="evidence" value="ECO:0007669"/>
    <property type="project" value="UniProtKB-KW"/>
</dbReference>
<dbReference type="GO" id="GO:0050992">
    <property type="term" value="P:dimethylallyl diphosphate biosynthetic process"/>
    <property type="evidence" value="ECO:0007669"/>
    <property type="project" value="UniProtKB-UniRule"/>
</dbReference>
<dbReference type="GO" id="GO:0019288">
    <property type="term" value="P:isopentenyl diphosphate biosynthetic process, methylerythritol 4-phosphate pathway"/>
    <property type="evidence" value="ECO:0007669"/>
    <property type="project" value="UniProtKB-UniRule"/>
</dbReference>
<dbReference type="GO" id="GO:0016114">
    <property type="term" value="P:terpenoid biosynthetic process"/>
    <property type="evidence" value="ECO:0007669"/>
    <property type="project" value="UniProtKB-UniRule"/>
</dbReference>
<dbReference type="CDD" id="cd13944">
    <property type="entry name" value="lytB_ispH"/>
    <property type="match status" value="1"/>
</dbReference>
<dbReference type="Gene3D" id="3.40.50.11270">
    <property type="match status" value="1"/>
</dbReference>
<dbReference type="Gene3D" id="3.40.1010.20">
    <property type="entry name" value="4-hydroxy-3-methylbut-2-enyl diphosphate reductase, catalytic domain"/>
    <property type="match status" value="2"/>
</dbReference>
<dbReference type="HAMAP" id="MF_00191">
    <property type="entry name" value="IspH"/>
    <property type="match status" value="1"/>
</dbReference>
<dbReference type="InterPro" id="IPR003451">
    <property type="entry name" value="LytB/IspH"/>
</dbReference>
<dbReference type="NCBIfam" id="TIGR00216">
    <property type="entry name" value="ispH_lytB"/>
    <property type="match status" value="1"/>
</dbReference>
<dbReference type="NCBIfam" id="NF009911">
    <property type="entry name" value="PRK13371.1"/>
    <property type="match status" value="1"/>
</dbReference>
<dbReference type="PANTHER" id="PTHR31619">
    <property type="entry name" value="4-HYDROXY-3-METHYLBUT-2-ENYL DIPHOSPHATE REDUCTASE, CHLOROPLASTIC"/>
    <property type="match status" value="1"/>
</dbReference>
<dbReference type="PANTHER" id="PTHR31619:SF5">
    <property type="entry name" value="4-HYDROXY-3-METHYLBUT-2-ENYL DIPHOSPHATE REDUCTASE, CHLOROPLASTIC"/>
    <property type="match status" value="1"/>
</dbReference>
<dbReference type="Pfam" id="PF02401">
    <property type="entry name" value="LYTB"/>
    <property type="match status" value="1"/>
</dbReference>
<organism>
    <name type="scientific">Prochlorococcus marinus (strain MIT 9301)</name>
    <dbReference type="NCBI Taxonomy" id="167546"/>
    <lineage>
        <taxon>Bacteria</taxon>
        <taxon>Bacillati</taxon>
        <taxon>Cyanobacteriota</taxon>
        <taxon>Cyanophyceae</taxon>
        <taxon>Synechococcales</taxon>
        <taxon>Prochlorococcaceae</taxon>
        <taxon>Prochlorococcus</taxon>
    </lineage>
</organism>
<proteinExistence type="inferred from homology"/>
<protein>
    <recommendedName>
        <fullName evidence="1">4-hydroxy-3-methylbut-2-enyl diphosphate reductase</fullName>
        <shortName evidence="1">HMBPP reductase</shortName>
        <ecNumber evidence="1">1.17.7.4</ecNumber>
    </recommendedName>
</protein>
<name>ISPH_PROM0</name>
<feature type="chain" id="PRO_1000021150" description="4-hydroxy-3-methylbut-2-enyl diphosphate reductase">
    <location>
        <begin position="1"/>
        <end position="398"/>
    </location>
</feature>
<feature type="active site" description="Proton donor" evidence="1">
    <location>
        <position position="187"/>
    </location>
</feature>
<feature type="binding site" evidence="1">
    <location>
        <position position="66"/>
    </location>
    <ligand>
        <name>[4Fe-4S] cluster</name>
        <dbReference type="ChEBI" id="CHEBI:49883"/>
    </ligand>
</feature>
<feature type="binding site" evidence="1">
    <location>
        <position position="96"/>
    </location>
    <ligand>
        <name>(2E)-4-hydroxy-3-methylbut-2-enyl diphosphate</name>
        <dbReference type="ChEBI" id="CHEBI:128753"/>
    </ligand>
</feature>
<feature type="binding site" evidence="1">
    <location>
        <position position="96"/>
    </location>
    <ligand>
        <name>dimethylallyl diphosphate</name>
        <dbReference type="ChEBI" id="CHEBI:57623"/>
    </ligand>
</feature>
<feature type="binding site" evidence="1">
    <location>
        <position position="96"/>
    </location>
    <ligand>
        <name>isopentenyl diphosphate</name>
        <dbReference type="ChEBI" id="CHEBI:128769"/>
    </ligand>
</feature>
<feature type="binding site" evidence="1">
    <location>
        <position position="157"/>
    </location>
    <ligand>
        <name>[4Fe-4S] cluster</name>
        <dbReference type="ChEBI" id="CHEBI:49883"/>
    </ligand>
</feature>
<feature type="binding site" evidence="1">
    <location>
        <position position="185"/>
    </location>
    <ligand>
        <name>(2E)-4-hydroxy-3-methylbut-2-enyl diphosphate</name>
        <dbReference type="ChEBI" id="CHEBI:128753"/>
    </ligand>
</feature>
<feature type="binding site" evidence="1">
    <location>
        <position position="185"/>
    </location>
    <ligand>
        <name>dimethylallyl diphosphate</name>
        <dbReference type="ChEBI" id="CHEBI:57623"/>
    </ligand>
</feature>
<feature type="binding site" evidence="1">
    <location>
        <position position="185"/>
    </location>
    <ligand>
        <name>isopentenyl diphosphate</name>
        <dbReference type="ChEBI" id="CHEBI:128769"/>
    </ligand>
</feature>
<feature type="binding site" evidence="1">
    <location>
        <position position="250"/>
    </location>
    <ligand>
        <name>(2E)-4-hydroxy-3-methylbut-2-enyl diphosphate</name>
        <dbReference type="ChEBI" id="CHEBI:128753"/>
    </ligand>
</feature>
<feature type="binding site" evidence="1">
    <location>
        <position position="288"/>
    </location>
    <ligand>
        <name>[4Fe-4S] cluster</name>
        <dbReference type="ChEBI" id="CHEBI:49883"/>
    </ligand>
</feature>
<feature type="binding site" evidence="1">
    <location>
        <position position="317"/>
    </location>
    <ligand>
        <name>(2E)-4-hydroxy-3-methylbut-2-enyl diphosphate</name>
        <dbReference type="ChEBI" id="CHEBI:128753"/>
    </ligand>
</feature>
<feature type="binding site" evidence="1">
    <location>
        <position position="317"/>
    </location>
    <ligand>
        <name>dimethylallyl diphosphate</name>
        <dbReference type="ChEBI" id="CHEBI:57623"/>
    </ligand>
</feature>
<feature type="binding site" evidence="1">
    <location>
        <position position="317"/>
    </location>
    <ligand>
        <name>isopentenyl diphosphate</name>
        <dbReference type="ChEBI" id="CHEBI:128769"/>
    </ligand>
</feature>
<feature type="binding site" evidence="1">
    <location>
        <position position="318"/>
    </location>
    <ligand>
        <name>(2E)-4-hydroxy-3-methylbut-2-enyl diphosphate</name>
        <dbReference type="ChEBI" id="CHEBI:128753"/>
    </ligand>
</feature>
<feature type="binding site" evidence="1">
    <location>
        <position position="318"/>
    </location>
    <ligand>
        <name>dimethylallyl diphosphate</name>
        <dbReference type="ChEBI" id="CHEBI:57623"/>
    </ligand>
</feature>
<feature type="binding site" evidence="1">
    <location>
        <position position="318"/>
    </location>
    <ligand>
        <name>isopentenyl diphosphate</name>
        <dbReference type="ChEBI" id="CHEBI:128769"/>
    </ligand>
</feature>
<feature type="binding site" evidence="1">
    <location>
        <position position="319"/>
    </location>
    <ligand>
        <name>(2E)-4-hydroxy-3-methylbut-2-enyl diphosphate</name>
        <dbReference type="ChEBI" id="CHEBI:128753"/>
    </ligand>
</feature>
<feature type="binding site" evidence="1">
    <location>
        <position position="319"/>
    </location>
    <ligand>
        <name>dimethylallyl diphosphate</name>
        <dbReference type="ChEBI" id="CHEBI:57623"/>
    </ligand>
</feature>
<feature type="binding site" evidence="1">
    <location>
        <position position="319"/>
    </location>
    <ligand>
        <name>isopentenyl diphosphate</name>
        <dbReference type="ChEBI" id="CHEBI:128769"/>
    </ligand>
</feature>
<feature type="binding site" evidence="1">
    <location>
        <position position="380"/>
    </location>
    <ligand>
        <name>(2E)-4-hydroxy-3-methylbut-2-enyl diphosphate</name>
        <dbReference type="ChEBI" id="CHEBI:128753"/>
    </ligand>
</feature>
<feature type="binding site" evidence="1">
    <location>
        <position position="380"/>
    </location>
    <ligand>
        <name>dimethylallyl diphosphate</name>
        <dbReference type="ChEBI" id="CHEBI:57623"/>
    </ligand>
</feature>
<feature type="binding site" evidence="1">
    <location>
        <position position="380"/>
    </location>
    <ligand>
        <name>isopentenyl diphosphate</name>
        <dbReference type="ChEBI" id="CHEBI:128769"/>
    </ligand>
</feature>
<comment type="function">
    <text evidence="1">Catalyzes the conversion of 1-hydroxy-2-methyl-2-(E)-butenyl 4-diphosphate (HMBPP) into a mixture of isopentenyl diphosphate (IPP) and dimethylallyl diphosphate (DMAPP). Acts in the terminal step of the DOXP/MEP pathway for isoprenoid precursor biosynthesis.</text>
</comment>
<comment type="catalytic activity">
    <reaction evidence="1">
        <text>isopentenyl diphosphate + 2 oxidized [2Fe-2S]-[ferredoxin] + H2O = (2E)-4-hydroxy-3-methylbut-2-enyl diphosphate + 2 reduced [2Fe-2S]-[ferredoxin] + 2 H(+)</text>
        <dbReference type="Rhea" id="RHEA:24488"/>
        <dbReference type="Rhea" id="RHEA-COMP:10000"/>
        <dbReference type="Rhea" id="RHEA-COMP:10001"/>
        <dbReference type="ChEBI" id="CHEBI:15377"/>
        <dbReference type="ChEBI" id="CHEBI:15378"/>
        <dbReference type="ChEBI" id="CHEBI:33737"/>
        <dbReference type="ChEBI" id="CHEBI:33738"/>
        <dbReference type="ChEBI" id="CHEBI:128753"/>
        <dbReference type="ChEBI" id="CHEBI:128769"/>
        <dbReference type="EC" id="1.17.7.4"/>
    </reaction>
</comment>
<comment type="catalytic activity">
    <reaction evidence="1">
        <text>dimethylallyl diphosphate + 2 oxidized [2Fe-2S]-[ferredoxin] + H2O = (2E)-4-hydroxy-3-methylbut-2-enyl diphosphate + 2 reduced [2Fe-2S]-[ferredoxin] + 2 H(+)</text>
        <dbReference type="Rhea" id="RHEA:24825"/>
        <dbReference type="Rhea" id="RHEA-COMP:10000"/>
        <dbReference type="Rhea" id="RHEA-COMP:10001"/>
        <dbReference type="ChEBI" id="CHEBI:15377"/>
        <dbReference type="ChEBI" id="CHEBI:15378"/>
        <dbReference type="ChEBI" id="CHEBI:33737"/>
        <dbReference type="ChEBI" id="CHEBI:33738"/>
        <dbReference type="ChEBI" id="CHEBI:57623"/>
        <dbReference type="ChEBI" id="CHEBI:128753"/>
        <dbReference type="EC" id="1.17.7.4"/>
    </reaction>
</comment>
<comment type="cofactor">
    <cofactor evidence="1">
        <name>[4Fe-4S] cluster</name>
        <dbReference type="ChEBI" id="CHEBI:49883"/>
    </cofactor>
    <text evidence="1">Binds 1 [4Fe-4S] cluster per subunit.</text>
</comment>
<comment type="pathway">
    <text evidence="1">Isoprenoid biosynthesis; dimethylallyl diphosphate biosynthesis; dimethylallyl diphosphate from (2E)-4-hydroxy-3-methylbutenyl diphosphate: step 1/1.</text>
</comment>
<comment type="pathway">
    <text evidence="1">Isoprenoid biosynthesis; isopentenyl diphosphate biosynthesis via DXP pathway; isopentenyl diphosphate from 1-deoxy-D-xylulose 5-phosphate: step 6/6.</text>
</comment>
<comment type="similarity">
    <text evidence="1">Belongs to the IspH family.</text>
</comment>
<evidence type="ECO:0000255" key="1">
    <source>
        <dbReference type="HAMAP-Rule" id="MF_00191"/>
    </source>
</evidence>
<gene>
    <name evidence="1" type="primary">ispH</name>
    <name type="ordered locus">P9301_02871</name>
</gene>
<accession>A3PAY5</accession>
<reference key="1">
    <citation type="journal article" date="2007" name="PLoS Genet.">
        <title>Patterns and implications of gene gain and loss in the evolution of Prochlorococcus.</title>
        <authorList>
            <person name="Kettler G.C."/>
            <person name="Martiny A.C."/>
            <person name="Huang K."/>
            <person name="Zucker J."/>
            <person name="Coleman M.L."/>
            <person name="Rodrigue S."/>
            <person name="Chen F."/>
            <person name="Lapidus A."/>
            <person name="Ferriera S."/>
            <person name="Johnson J."/>
            <person name="Steglich C."/>
            <person name="Church G.M."/>
            <person name="Richardson P."/>
            <person name="Chisholm S.W."/>
        </authorList>
    </citation>
    <scope>NUCLEOTIDE SEQUENCE [LARGE SCALE GENOMIC DNA]</scope>
    <source>
        <strain>MIT 9301</strain>
    </source>
</reference>